<organism>
    <name type="scientific">Amoebophilus asiaticus (strain 5a2)</name>
    <dbReference type="NCBI Taxonomy" id="452471"/>
    <lineage>
        <taxon>Bacteria</taxon>
        <taxon>Pseudomonadati</taxon>
        <taxon>Bacteroidota</taxon>
        <taxon>Cytophagia</taxon>
        <taxon>Cytophagales</taxon>
        <taxon>Amoebophilaceae</taxon>
        <taxon>Candidatus Amoebophilus</taxon>
    </lineage>
</organism>
<accession>B3ES11</accession>
<feature type="chain" id="PRO_0000374107" description="tRNA-2-methylthio-N(6)-dimethylallyladenosine synthase">
    <location>
        <begin position="1"/>
        <end position="486"/>
    </location>
</feature>
<feature type="domain" description="MTTase N-terminal" evidence="1">
    <location>
        <begin position="35"/>
        <end position="151"/>
    </location>
</feature>
<feature type="domain" description="Radical SAM core" evidence="2">
    <location>
        <begin position="175"/>
        <end position="419"/>
    </location>
</feature>
<feature type="domain" description="TRAM" evidence="1">
    <location>
        <begin position="422"/>
        <end position="485"/>
    </location>
</feature>
<feature type="binding site" evidence="1">
    <location>
        <position position="44"/>
    </location>
    <ligand>
        <name>[4Fe-4S] cluster</name>
        <dbReference type="ChEBI" id="CHEBI:49883"/>
        <label>1</label>
    </ligand>
</feature>
<feature type="binding site" evidence="1">
    <location>
        <position position="80"/>
    </location>
    <ligand>
        <name>[4Fe-4S] cluster</name>
        <dbReference type="ChEBI" id="CHEBI:49883"/>
        <label>1</label>
    </ligand>
</feature>
<feature type="binding site" evidence="1">
    <location>
        <position position="114"/>
    </location>
    <ligand>
        <name>[4Fe-4S] cluster</name>
        <dbReference type="ChEBI" id="CHEBI:49883"/>
        <label>1</label>
    </ligand>
</feature>
<feature type="binding site" evidence="1">
    <location>
        <position position="189"/>
    </location>
    <ligand>
        <name>[4Fe-4S] cluster</name>
        <dbReference type="ChEBI" id="CHEBI:49883"/>
        <label>2</label>
        <note>4Fe-4S-S-AdoMet</note>
    </ligand>
</feature>
<feature type="binding site" evidence="1">
    <location>
        <position position="193"/>
    </location>
    <ligand>
        <name>[4Fe-4S] cluster</name>
        <dbReference type="ChEBI" id="CHEBI:49883"/>
        <label>2</label>
        <note>4Fe-4S-S-AdoMet</note>
    </ligand>
</feature>
<feature type="binding site" evidence="1">
    <location>
        <position position="196"/>
    </location>
    <ligand>
        <name>[4Fe-4S] cluster</name>
        <dbReference type="ChEBI" id="CHEBI:49883"/>
        <label>2</label>
        <note>4Fe-4S-S-AdoMet</note>
    </ligand>
</feature>
<dbReference type="EC" id="2.8.4.3" evidence="1"/>
<dbReference type="EMBL" id="CP001102">
    <property type="protein sequence ID" value="ACE06013.1"/>
    <property type="molecule type" value="Genomic_DNA"/>
</dbReference>
<dbReference type="RefSeq" id="WP_012472780.1">
    <property type="nucleotide sequence ID" value="NC_010830.1"/>
</dbReference>
<dbReference type="SMR" id="B3ES11"/>
<dbReference type="STRING" id="452471.Aasi_0614"/>
<dbReference type="KEGG" id="aas:Aasi_0614"/>
<dbReference type="eggNOG" id="COG0621">
    <property type="taxonomic scope" value="Bacteria"/>
</dbReference>
<dbReference type="HOGENOM" id="CLU_018697_2_1_10"/>
<dbReference type="OrthoDB" id="9805215at2"/>
<dbReference type="Proteomes" id="UP000001227">
    <property type="component" value="Chromosome"/>
</dbReference>
<dbReference type="GO" id="GO:0005829">
    <property type="term" value="C:cytosol"/>
    <property type="evidence" value="ECO:0007669"/>
    <property type="project" value="TreeGrafter"/>
</dbReference>
<dbReference type="GO" id="GO:0051539">
    <property type="term" value="F:4 iron, 4 sulfur cluster binding"/>
    <property type="evidence" value="ECO:0007669"/>
    <property type="project" value="UniProtKB-UniRule"/>
</dbReference>
<dbReference type="GO" id="GO:0046872">
    <property type="term" value="F:metal ion binding"/>
    <property type="evidence" value="ECO:0007669"/>
    <property type="project" value="UniProtKB-KW"/>
</dbReference>
<dbReference type="GO" id="GO:0035597">
    <property type="term" value="F:N6-isopentenyladenosine methylthiotransferase activity"/>
    <property type="evidence" value="ECO:0007669"/>
    <property type="project" value="TreeGrafter"/>
</dbReference>
<dbReference type="CDD" id="cd01335">
    <property type="entry name" value="Radical_SAM"/>
    <property type="match status" value="1"/>
</dbReference>
<dbReference type="FunFam" id="3.40.50.12160:FF:000003">
    <property type="entry name" value="CDK5 regulatory subunit-associated protein 1"/>
    <property type="match status" value="1"/>
</dbReference>
<dbReference type="FunFam" id="3.80.30.20:FF:000001">
    <property type="entry name" value="tRNA-2-methylthio-N(6)-dimethylallyladenosine synthase 2"/>
    <property type="match status" value="1"/>
</dbReference>
<dbReference type="Gene3D" id="3.40.50.12160">
    <property type="entry name" value="Methylthiotransferase, N-terminal domain"/>
    <property type="match status" value="1"/>
</dbReference>
<dbReference type="Gene3D" id="3.80.30.20">
    <property type="entry name" value="tm_1862 like domain"/>
    <property type="match status" value="1"/>
</dbReference>
<dbReference type="HAMAP" id="MF_01864">
    <property type="entry name" value="tRNA_metthiotr_MiaB"/>
    <property type="match status" value="1"/>
</dbReference>
<dbReference type="InterPro" id="IPR006638">
    <property type="entry name" value="Elp3/MiaA/NifB-like_rSAM"/>
</dbReference>
<dbReference type="InterPro" id="IPR005839">
    <property type="entry name" value="Methylthiotransferase"/>
</dbReference>
<dbReference type="InterPro" id="IPR020612">
    <property type="entry name" value="Methylthiotransferase_CS"/>
</dbReference>
<dbReference type="InterPro" id="IPR013848">
    <property type="entry name" value="Methylthiotransferase_N"/>
</dbReference>
<dbReference type="InterPro" id="IPR038135">
    <property type="entry name" value="Methylthiotransferase_N_sf"/>
</dbReference>
<dbReference type="InterPro" id="IPR006463">
    <property type="entry name" value="MiaB_methiolase"/>
</dbReference>
<dbReference type="InterPro" id="IPR007197">
    <property type="entry name" value="rSAM"/>
</dbReference>
<dbReference type="InterPro" id="IPR023404">
    <property type="entry name" value="rSAM_horseshoe"/>
</dbReference>
<dbReference type="InterPro" id="IPR002792">
    <property type="entry name" value="TRAM_dom"/>
</dbReference>
<dbReference type="NCBIfam" id="TIGR01574">
    <property type="entry name" value="miaB-methiolase"/>
    <property type="match status" value="1"/>
</dbReference>
<dbReference type="NCBIfam" id="TIGR00089">
    <property type="entry name" value="MiaB/RimO family radical SAM methylthiotransferase"/>
    <property type="match status" value="1"/>
</dbReference>
<dbReference type="PANTHER" id="PTHR43020">
    <property type="entry name" value="CDK5 REGULATORY SUBUNIT-ASSOCIATED PROTEIN 1"/>
    <property type="match status" value="1"/>
</dbReference>
<dbReference type="PANTHER" id="PTHR43020:SF2">
    <property type="entry name" value="MITOCHONDRIAL TRNA METHYLTHIOTRANSFERASE CDK5RAP1"/>
    <property type="match status" value="1"/>
</dbReference>
<dbReference type="Pfam" id="PF04055">
    <property type="entry name" value="Radical_SAM"/>
    <property type="match status" value="1"/>
</dbReference>
<dbReference type="Pfam" id="PF01938">
    <property type="entry name" value="TRAM"/>
    <property type="match status" value="1"/>
</dbReference>
<dbReference type="Pfam" id="PF00919">
    <property type="entry name" value="UPF0004"/>
    <property type="match status" value="1"/>
</dbReference>
<dbReference type="SFLD" id="SFLDF00273">
    <property type="entry name" value="(dimethylallyl)adenosine_tRNA"/>
    <property type="match status" value="1"/>
</dbReference>
<dbReference type="SFLD" id="SFLDG01082">
    <property type="entry name" value="B12-binding_domain_containing"/>
    <property type="match status" value="1"/>
</dbReference>
<dbReference type="SFLD" id="SFLDF00413">
    <property type="entry name" value="CDK5RAP1"/>
    <property type="match status" value="1"/>
</dbReference>
<dbReference type="SFLD" id="SFLDS00029">
    <property type="entry name" value="Radical_SAM"/>
    <property type="match status" value="1"/>
</dbReference>
<dbReference type="SMART" id="SM00729">
    <property type="entry name" value="Elp3"/>
    <property type="match status" value="1"/>
</dbReference>
<dbReference type="SUPFAM" id="SSF102114">
    <property type="entry name" value="Radical SAM enzymes"/>
    <property type="match status" value="1"/>
</dbReference>
<dbReference type="PROSITE" id="PS51449">
    <property type="entry name" value="MTTASE_N"/>
    <property type="match status" value="1"/>
</dbReference>
<dbReference type="PROSITE" id="PS01278">
    <property type="entry name" value="MTTASE_RADICAL"/>
    <property type="match status" value="1"/>
</dbReference>
<dbReference type="PROSITE" id="PS51918">
    <property type="entry name" value="RADICAL_SAM"/>
    <property type="match status" value="1"/>
</dbReference>
<dbReference type="PROSITE" id="PS50926">
    <property type="entry name" value="TRAM"/>
    <property type="match status" value="1"/>
</dbReference>
<sequence>MQDKVLTDLIKTEKPEQIEDFLPNEEDITSPTITRNLYVESYGCQMNIADSEVVVSILRPHGFEITDTYEKADVIFINTCAIRDKAEQTVRKRLSQFNQLKRRNPDLVIGVLGCMAERLKQTLLEEEKLVDLVAGPDAYRDLPRLLATVDSGHKAINTFLSREETYADISPIRLNSNGVSAFISIMRGCDNMCSFCVVPFTRGRERSRDPYSIVKEATELFEQGYREVTLLGQNVDSYKWSPNTDKKEQPTTPQEGVVNFAQLLAMVAQIHPDLRIRFSTSHPKDITDQVLYTIKAYDNICKYIHLPVQSGSSRVLKLMNRTYDRAWYLQKIEDIRRIVGEDCGISSDMIAGFCTETEEDHQDTLSLMEHIKYEFSYMFYYSERPGTLAARKYADDVPLAVKKRRLQEIIDKQRQHSFEKNLKDIGKVYQVLVEGPSKKSDIEWQGRNSANKVVVFPNVDCKKGTYVDVLITNCTTGTLLGEICTR</sequence>
<gene>
    <name evidence="1" type="primary">miaB</name>
    <name type="ordered locus">Aasi_0614</name>
</gene>
<reference key="1">
    <citation type="journal article" date="2010" name="J. Bacteriol.">
        <title>The genome of the amoeba symbiont 'Candidatus Amoebophilus asiaticus' reveals common mechanisms for host cell interaction among amoeba-associated bacteria.</title>
        <authorList>
            <person name="Schmitz-Esser S."/>
            <person name="Tischler P."/>
            <person name="Arnold R."/>
            <person name="Montanaro J."/>
            <person name="Wagner M."/>
            <person name="Rattei T."/>
            <person name="Horn M."/>
        </authorList>
    </citation>
    <scope>NUCLEOTIDE SEQUENCE [LARGE SCALE GENOMIC DNA]</scope>
    <source>
        <strain>5a2</strain>
    </source>
</reference>
<name>MIAB_AMOA5</name>
<keyword id="KW-0004">4Fe-4S</keyword>
<keyword id="KW-0963">Cytoplasm</keyword>
<keyword id="KW-0408">Iron</keyword>
<keyword id="KW-0411">Iron-sulfur</keyword>
<keyword id="KW-0479">Metal-binding</keyword>
<keyword id="KW-1185">Reference proteome</keyword>
<keyword id="KW-0949">S-adenosyl-L-methionine</keyword>
<keyword id="KW-0808">Transferase</keyword>
<keyword id="KW-0819">tRNA processing</keyword>
<proteinExistence type="inferred from homology"/>
<comment type="function">
    <text evidence="1">Catalyzes the methylthiolation of N6-(dimethylallyl)adenosine (i(6)A), leading to the formation of 2-methylthio-N6-(dimethylallyl)adenosine (ms(2)i(6)A) at position 37 in tRNAs that read codons beginning with uridine.</text>
</comment>
<comment type="catalytic activity">
    <reaction evidence="1">
        <text>N(6)-dimethylallyladenosine(37) in tRNA + (sulfur carrier)-SH + AH2 + 2 S-adenosyl-L-methionine = 2-methylsulfanyl-N(6)-dimethylallyladenosine(37) in tRNA + (sulfur carrier)-H + 5'-deoxyadenosine + L-methionine + A + S-adenosyl-L-homocysteine + 2 H(+)</text>
        <dbReference type="Rhea" id="RHEA:37067"/>
        <dbReference type="Rhea" id="RHEA-COMP:10375"/>
        <dbReference type="Rhea" id="RHEA-COMP:10376"/>
        <dbReference type="Rhea" id="RHEA-COMP:14737"/>
        <dbReference type="Rhea" id="RHEA-COMP:14739"/>
        <dbReference type="ChEBI" id="CHEBI:13193"/>
        <dbReference type="ChEBI" id="CHEBI:15378"/>
        <dbReference type="ChEBI" id="CHEBI:17319"/>
        <dbReference type="ChEBI" id="CHEBI:17499"/>
        <dbReference type="ChEBI" id="CHEBI:29917"/>
        <dbReference type="ChEBI" id="CHEBI:57844"/>
        <dbReference type="ChEBI" id="CHEBI:57856"/>
        <dbReference type="ChEBI" id="CHEBI:59789"/>
        <dbReference type="ChEBI" id="CHEBI:64428"/>
        <dbReference type="ChEBI" id="CHEBI:74415"/>
        <dbReference type="ChEBI" id="CHEBI:74417"/>
        <dbReference type="EC" id="2.8.4.3"/>
    </reaction>
</comment>
<comment type="cofactor">
    <cofactor evidence="1">
        <name>[4Fe-4S] cluster</name>
        <dbReference type="ChEBI" id="CHEBI:49883"/>
    </cofactor>
    <text evidence="1">Binds 2 [4Fe-4S] clusters. One cluster is coordinated with 3 cysteines and an exchangeable S-adenosyl-L-methionine.</text>
</comment>
<comment type="subunit">
    <text evidence="1">Monomer.</text>
</comment>
<comment type="subcellular location">
    <subcellularLocation>
        <location evidence="1">Cytoplasm</location>
    </subcellularLocation>
</comment>
<comment type="similarity">
    <text evidence="1">Belongs to the methylthiotransferase family. MiaB subfamily.</text>
</comment>
<evidence type="ECO:0000255" key="1">
    <source>
        <dbReference type="HAMAP-Rule" id="MF_01864"/>
    </source>
</evidence>
<evidence type="ECO:0000255" key="2">
    <source>
        <dbReference type="PROSITE-ProRule" id="PRU01266"/>
    </source>
</evidence>
<protein>
    <recommendedName>
        <fullName evidence="1">tRNA-2-methylthio-N(6)-dimethylallyladenosine synthase</fullName>
        <ecNumber evidence="1">2.8.4.3</ecNumber>
    </recommendedName>
    <alternativeName>
        <fullName evidence="1">(Dimethylallyl)adenosine tRNA methylthiotransferase MiaB</fullName>
    </alternativeName>
    <alternativeName>
        <fullName evidence="1">tRNA-i(6)A37 methylthiotransferase</fullName>
    </alternativeName>
</protein>